<comment type="function">
    <text evidence="1">Binds to 23S rRNA. Forms part of two intersubunit bridges in the 70S ribosome.</text>
</comment>
<comment type="subunit">
    <text evidence="1">Part of the 50S ribosomal subunit. Forms a cluster with proteins L3 and L19. In the 70S ribosome, L14 and L19 interact and together make contacts with the 16S rRNA in bridges B5 and B8.</text>
</comment>
<comment type="similarity">
    <text evidence="1">Belongs to the universal ribosomal protein uL14 family.</text>
</comment>
<evidence type="ECO:0000255" key="1">
    <source>
        <dbReference type="HAMAP-Rule" id="MF_01367"/>
    </source>
</evidence>
<evidence type="ECO:0000305" key="2"/>
<accession>B3DQC4</accession>
<keyword id="KW-0687">Ribonucleoprotein</keyword>
<keyword id="KW-0689">Ribosomal protein</keyword>
<keyword id="KW-0694">RNA-binding</keyword>
<keyword id="KW-0699">rRNA-binding</keyword>
<protein>
    <recommendedName>
        <fullName evidence="1">Large ribosomal subunit protein uL14</fullName>
    </recommendedName>
    <alternativeName>
        <fullName evidence="2">50S ribosomal protein L14</fullName>
    </alternativeName>
</protein>
<sequence length="122" mass="13151">MIQQETRLHVADNTGAKELLAIRVLGGSKRRYAGIGDVIVASVKDAIPGGSVKKGDVVKAVVVRTVKESRRADGSYIKFDENAAVILGSGREPKGTRIFGPVGRELREHKFMKIVSLAPEVI</sequence>
<organism>
    <name type="scientific">Bifidobacterium longum (strain DJO10A)</name>
    <dbReference type="NCBI Taxonomy" id="205913"/>
    <lineage>
        <taxon>Bacteria</taxon>
        <taxon>Bacillati</taxon>
        <taxon>Actinomycetota</taxon>
        <taxon>Actinomycetes</taxon>
        <taxon>Bifidobacteriales</taxon>
        <taxon>Bifidobacteriaceae</taxon>
        <taxon>Bifidobacterium</taxon>
    </lineage>
</organism>
<gene>
    <name evidence="1" type="primary">rplN</name>
    <name type="ordered locus">BLD_1717</name>
</gene>
<reference key="1">
    <citation type="journal article" date="2008" name="BMC Genomics">
        <title>Comparative genomic analysis of the gut bacterium Bifidobacterium longum reveals loci susceptible to deletion during pure culture growth.</title>
        <authorList>
            <person name="Lee J.H."/>
            <person name="Karamychev V.N."/>
            <person name="Kozyavkin S.A."/>
            <person name="Mills D."/>
            <person name="Pavlov A.R."/>
            <person name="Pavlova N.V."/>
            <person name="Polouchine N.N."/>
            <person name="Richardson P.M."/>
            <person name="Shakhova V.V."/>
            <person name="Slesarev A.I."/>
            <person name="Weimer B."/>
            <person name="O'Sullivan D.J."/>
        </authorList>
    </citation>
    <scope>NUCLEOTIDE SEQUENCE [LARGE SCALE GENOMIC DNA]</scope>
    <source>
        <strain>DJO10A</strain>
    </source>
</reference>
<feature type="chain" id="PRO_1000144226" description="Large ribosomal subunit protein uL14">
    <location>
        <begin position="1"/>
        <end position="122"/>
    </location>
</feature>
<dbReference type="EMBL" id="CP000605">
    <property type="protein sequence ID" value="ACD99162.1"/>
    <property type="molecule type" value="Genomic_DNA"/>
</dbReference>
<dbReference type="RefSeq" id="WP_003829893.1">
    <property type="nucleotide sequence ID" value="NZ_AABM02000025.1"/>
</dbReference>
<dbReference type="SMR" id="B3DQC4"/>
<dbReference type="GeneID" id="69578887"/>
<dbReference type="KEGG" id="blj:BLD_1717"/>
<dbReference type="HOGENOM" id="CLU_095071_2_1_11"/>
<dbReference type="Proteomes" id="UP000002419">
    <property type="component" value="Chromosome"/>
</dbReference>
<dbReference type="GO" id="GO:0022625">
    <property type="term" value="C:cytosolic large ribosomal subunit"/>
    <property type="evidence" value="ECO:0007669"/>
    <property type="project" value="TreeGrafter"/>
</dbReference>
<dbReference type="GO" id="GO:0070180">
    <property type="term" value="F:large ribosomal subunit rRNA binding"/>
    <property type="evidence" value="ECO:0007669"/>
    <property type="project" value="TreeGrafter"/>
</dbReference>
<dbReference type="GO" id="GO:0003735">
    <property type="term" value="F:structural constituent of ribosome"/>
    <property type="evidence" value="ECO:0007669"/>
    <property type="project" value="InterPro"/>
</dbReference>
<dbReference type="GO" id="GO:0006412">
    <property type="term" value="P:translation"/>
    <property type="evidence" value="ECO:0007669"/>
    <property type="project" value="UniProtKB-UniRule"/>
</dbReference>
<dbReference type="CDD" id="cd00337">
    <property type="entry name" value="Ribosomal_uL14"/>
    <property type="match status" value="1"/>
</dbReference>
<dbReference type="FunFam" id="2.40.150.20:FF:000001">
    <property type="entry name" value="50S ribosomal protein L14"/>
    <property type="match status" value="1"/>
</dbReference>
<dbReference type="Gene3D" id="2.40.150.20">
    <property type="entry name" value="Ribosomal protein L14"/>
    <property type="match status" value="1"/>
</dbReference>
<dbReference type="HAMAP" id="MF_01367">
    <property type="entry name" value="Ribosomal_uL14"/>
    <property type="match status" value="1"/>
</dbReference>
<dbReference type="InterPro" id="IPR000218">
    <property type="entry name" value="Ribosomal_uL14"/>
</dbReference>
<dbReference type="InterPro" id="IPR005745">
    <property type="entry name" value="Ribosomal_uL14_bac-type"/>
</dbReference>
<dbReference type="InterPro" id="IPR019972">
    <property type="entry name" value="Ribosomal_uL14_CS"/>
</dbReference>
<dbReference type="InterPro" id="IPR036853">
    <property type="entry name" value="Ribosomal_uL14_sf"/>
</dbReference>
<dbReference type="NCBIfam" id="TIGR01067">
    <property type="entry name" value="rplN_bact"/>
    <property type="match status" value="1"/>
</dbReference>
<dbReference type="PANTHER" id="PTHR11761">
    <property type="entry name" value="50S/60S RIBOSOMAL PROTEIN L14/L23"/>
    <property type="match status" value="1"/>
</dbReference>
<dbReference type="PANTHER" id="PTHR11761:SF3">
    <property type="entry name" value="LARGE RIBOSOMAL SUBUNIT PROTEIN UL14M"/>
    <property type="match status" value="1"/>
</dbReference>
<dbReference type="Pfam" id="PF00238">
    <property type="entry name" value="Ribosomal_L14"/>
    <property type="match status" value="1"/>
</dbReference>
<dbReference type="SMART" id="SM01374">
    <property type="entry name" value="Ribosomal_L14"/>
    <property type="match status" value="1"/>
</dbReference>
<dbReference type="SUPFAM" id="SSF50193">
    <property type="entry name" value="Ribosomal protein L14"/>
    <property type="match status" value="1"/>
</dbReference>
<dbReference type="PROSITE" id="PS00049">
    <property type="entry name" value="RIBOSOMAL_L14"/>
    <property type="match status" value="1"/>
</dbReference>
<name>RL14_BIFLD</name>
<proteinExistence type="inferred from homology"/>